<dbReference type="EC" id="7.1.1.-" evidence="1"/>
<dbReference type="EMBL" id="CP000668">
    <property type="protein sequence ID" value="ABP40339.1"/>
    <property type="molecule type" value="Genomic_DNA"/>
</dbReference>
<dbReference type="RefSeq" id="WP_002210271.1">
    <property type="nucleotide sequence ID" value="NZ_CP009715.1"/>
</dbReference>
<dbReference type="SMR" id="A4TM27"/>
<dbReference type="GeneID" id="96666077"/>
<dbReference type="KEGG" id="ypp:YPDSF_1956"/>
<dbReference type="PATRIC" id="fig|386656.14.peg.3421"/>
<dbReference type="GO" id="GO:0030964">
    <property type="term" value="C:NADH dehydrogenase complex"/>
    <property type="evidence" value="ECO:0007669"/>
    <property type="project" value="TreeGrafter"/>
</dbReference>
<dbReference type="GO" id="GO:0005886">
    <property type="term" value="C:plasma membrane"/>
    <property type="evidence" value="ECO:0007669"/>
    <property type="project" value="UniProtKB-SubCell"/>
</dbReference>
<dbReference type="GO" id="GO:0050136">
    <property type="term" value="F:NADH:ubiquinone reductase (non-electrogenic) activity"/>
    <property type="evidence" value="ECO:0007669"/>
    <property type="project" value="UniProtKB-UniRule"/>
</dbReference>
<dbReference type="GO" id="GO:0048038">
    <property type="term" value="F:quinone binding"/>
    <property type="evidence" value="ECO:0007669"/>
    <property type="project" value="UniProtKB-KW"/>
</dbReference>
<dbReference type="GO" id="GO:0042773">
    <property type="term" value="P:ATP synthesis coupled electron transport"/>
    <property type="evidence" value="ECO:0007669"/>
    <property type="project" value="InterPro"/>
</dbReference>
<dbReference type="FunFam" id="1.10.287.3510:FF:000001">
    <property type="entry name" value="NADH-quinone oxidoreductase subunit K"/>
    <property type="match status" value="1"/>
</dbReference>
<dbReference type="Gene3D" id="1.10.287.3510">
    <property type="match status" value="1"/>
</dbReference>
<dbReference type="HAMAP" id="MF_01456">
    <property type="entry name" value="NDH1_NuoK"/>
    <property type="match status" value="1"/>
</dbReference>
<dbReference type="InterPro" id="IPR001133">
    <property type="entry name" value="NADH_UbQ_OxRdtase_chain4L/K"/>
</dbReference>
<dbReference type="InterPro" id="IPR039428">
    <property type="entry name" value="NUOK/Mnh_C1-like"/>
</dbReference>
<dbReference type="NCBIfam" id="NF004319">
    <property type="entry name" value="PRK05715.1-1"/>
    <property type="match status" value="1"/>
</dbReference>
<dbReference type="NCBIfam" id="NF004320">
    <property type="entry name" value="PRK05715.1-2"/>
    <property type="match status" value="1"/>
</dbReference>
<dbReference type="PANTHER" id="PTHR11434:SF16">
    <property type="entry name" value="NADH-UBIQUINONE OXIDOREDUCTASE CHAIN 4L"/>
    <property type="match status" value="1"/>
</dbReference>
<dbReference type="PANTHER" id="PTHR11434">
    <property type="entry name" value="NADH-UBIQUINONE OXIDOREDUCTASE SUBUNIT ND4L"/>
    <property type="match status" value="1"/>
</dbReference>
<dbReference type="Pfam" id="PF00420">
    <property type="entry name" value="Oxidored_q2"/>
    <property type="match status" value="1"/>
</dbReference>
<sequence>MIPLQHGLILAAILFVLGLTGLLIRRNLLFMLISLEVMINAAALAFVVAGSYWGQADGQVMYILAITLAAAEASIGLALLLQLYRRRHTLDIDTVSEMRG</sequence>
<protein>
    <recommendedName>
        <fullName evidence="1">NADH-quinone oxidoreductase subunit K</fullName>
        <ecNumber evidence="1">7.1.1.-</ecNumber>
    </recommendedName>
    <alternativeName>
        <fullName evidence="1">NADH dehydrogenase I subunit K</fullName>
    </alternativeName>
    <alternativeName>
        <fullName evidence="1">NDH-1 subunit K</fullName>
    </alternativeName>
</protein>
<comment type="function">
    <text evidence="1">NDH-1 shuttles electrons from NADH, via FMN and iron-sulfur (Fe-S) centers, to quinones in the respiratory chain. The immediate electron acceptor for the enzyme in this species is believed to be ubiquinone. Couples the redox reaction to proton translocation (for every two electrons transferred, four hydrogen ions are translocated across the cytoplasmic membrane), and thus conserves the redox energy in a proton gradient.</text>
</comment>
<comment type="catalytic activity">
    <reaction evidence="1">
        <text>a quinone + NADH + 5 H(+)(in) = a quinol + NAD(+) + 4 H(+)(out)</text>
        <dbReference type="Rhea" id="RHEA:57888"/>
        <dbReference type="ChEBI" id="CHEBI:15378"/>
        <dbReference type="ChEBI" id="CHEBI:24646"/>
        <dbReference type="ChEBI" id="CHEBI:57540"/>
        <dbReference type="ChEBI" id="CHEBI:57945"/>
        <dbReference type="ChEBI" id="CHEBI:132124"/>
    </reaction>
</comment>
<comment type="subunit">
    <text evidence="1">NDH-1 is composed of 13 different subunits. Subunits NuoA, H, J, K, L, M, N constitute the membrane sector of the complex.</text>
</comment>
<comment type="subcellular location">
    <subcellularLocation>
        <location evidence="1">Cell inner membrane</location>
        <topology evidence="1">Multi-pass membrane protein</topology>
    </subcellularLocation>
</comment>
<comment type="similarity">
    <text evidence="1">Belongs to the complex I subunit 4L family.</text>
</comment>
<feature type="chain" id="PRO_0000390284" description="NADH-quinone oxidoreductase subunit K">
    <location>
        <begin position="1"/>
        <end position="100"/>
    </location>
</feature>
<feature type="transmembrane region" description="Helical" evidence="1">
    <location>
        <begin position="4"/>
        <end position="24"/>
    </location>
</feature>
<feature type="transmembrane region" description="Helical" evidence="1">
    <location>
        <begin position="28"/>
        <end position="48"/>
    </location>
</feature>
<feature type="transmembrane region" description="Helical" evidence="1">
    <location>
        <begin position="60"/>
        <end position="80"/>
    </location>
</feature>
<proteinExistence type="inferred from homology"/>
<evidence type="ECO:0000255" key="1">
    <source>
        <dbReference type="HAMAP-Rule" id="MF_01456"/>
    </source>
</evidence>
<gene>
    <name evidence="1" type="primary">nuoK</name>
    <name type="ordered locus">YPDSF_1956</name>
</gene>
<reference key="1">
    <citation type="submission" date="2007-02" db="EMBL/GenBank/DDBJ databases">
        <title>Complete sequence of chromosome of Yersinia pestis Pestoides F.</title>
        <authorList>
            <consortium name="US DOE Joint Genome Institute"/>
            <person name="Copeland A."/>
            <person name="Lucas S."/>
            <person name="Lapidus A."/>
            <person name="Barry K."/>
            <person name="Detter J.C."/>
            <person name="Glavina del Rio T."/>
            <person name="Hammon N."/>
            <person name="Israni S."/>
            <person name="Dalin E."/>
            <person name="Tice H."/>
            <person name="Pitluck S."/>
            <person name="Di Bartolo G."/>
            <person name="Chain P."/>
            <person name="Malfatti S."/>
            <person name="Shin M."/>
            <person name="Vergez L."/>
            <person name="Schmutz J."/>
            <person name="Larimer F."/>
            <person name="Land M."/>
            <person name="Hauser L."/>
            <person name="Worsham P."/>
            <person name="Chu M."/>
            <person name="Bearden S."/>
            <person name="Garcia E."/>
            <person name="Richardson P."/>
        </authorList>
    </citation>
    <scope>NUCLEOTIDE SEQUENCE [LARGE SCALE GENOMIC DNA]</scope>
    <source>
        <strain>Pestoides F</strain>
    </source>
</reference>
<keyword id="KW-0997">Cell inner membrane</keyword>
<keyword id="KW-1003">Cell membrane</keyword>
<keyword id="KW-0472">Membrane</keyword>
<keyword id="KW-0520">NAD</keyword>
<keyword id="KW-0874">Quinone</keyword>
<keyword id="KW-1278">Translocase</keyword>
<keyword id="KW-0812">Transmembrane</keyword>
<keyword id="KW-1133">Transmembrane helix</keyword>
<keyword id="KW-0813">Transport</keyword>
<keyword id="KW-0830">Ubiquinone</keyword>
<organism>
    <name type="scientific">Yersinia pestis (strain Pestoides F)</name>
    <dbReference type="NCBI Taxonomy" id="386656"/>
    <lineage>
        <taxon>Bacteria</taxon>
        <taxon>Pseudomonadati</taxon>
        <taxon>Pseudomonadota</taxon>
        <taxon>Gammaproteobacteria</taxon>
        <taxon>Enterobacterales</taxon>
        <taxon>Yersiniaceae</taxon>
        <taxon>Yersinia</taxon>
    </lineage>
</organism>
<name>NUOK_YERPP</name>
<accession>A4TM27</accession>